<reference key="1">
    <citation type="journal article" date="2004" name="Nature">
        <title>Genome evolution in yeasts.</title>
        <authorList>
            <person name="Dujon B."/>
            <person name="Sherman D."/>
            <person name="Fischer G."/>
            <person name="Durrens P."/>
            <person name="Casaregola S."/>
            <person name="Lafontaine I."/>
            <person name="de Montigny J."/>
            <person name="Marck C."/>
            <person name="Neuveglise C."/>
            <person name="Talla E."/>
            <person name="Goffard N."/>
            <person name="Frangeul L."/>
            <person name="Aigle M."/>
            <person name="Anthouard V."/>
            <person name="Babour A."/>
            <person name="Barbe V."/>
            <person name="Barnay S."/>
            <person name="Blanchin S."/>
            <person name="Beckerich J.-M."/>
            <person name="Beyne E."/>
            <person name="Bleykasten C."/>
            <person name="Boisrame A."/>
            <person name="Boyer J."/>
            <person name="Cattolico L."/>
            <person name="Confanioleri F."/>
            <person name="de Daruvar A."/>
            <person name="Despons L."/>
            <person name="Fabre E."/>
            <person name="Fairhead C."/>
            <person name="Ferry-Dumazet H."/>
            <person name="Groppi A."/>
            <person name="Hantraye F."/>
            <person name="Hennequin C."/>
            <person name="Jauniaux N."/>
            <person name="Joyet P."/>
            <person name="Kachouri R."/>
            <person name="Kerrest A."/>
            <person name="Koszul R."/>
            <person name="Lemaire M."/>
            <person name="Lesur I."/>
            <person name="Ma L."/>
            <person name="Muller H."/>
            <person name="Nicaud J.-M."/>
            <person name="Nikolski M."/>
            <person name="Oztas S."/>
            <person name="Ozier-Kalogeropoulos O."/>
            <person name="Pellenz S."/>
            <person name="Potier S."/>
            <person name="Richard G.-F."/>
            <person name="Straub M.-L."/>
            <person name="Suleau A."/>
            <person name="Swennen D."/>
            <person name="Tekaia F."/>
            <person name="Wesolowski-Louvel M."/>
            <person name="Westhof E."/>
            <person name="Wirth B."/>
            <person name="Zeniou-Meyer M."/>
            <person name="Zivanovic Y."/>
            <person name="Bolotin-Fukuhara M."/>
            <person name="Thierry A."/>
            <person name="Bouchier C."/>
            <person name="Caudron B."/>
            <person name="Scarpelli C."/>
            <person name="Gaillardin C."/>
            <person name="Weissenbach J."/>
            <person name="Wincker P."/>
            <person name="Souciet J.-L."/>
        </authorList>
    </citation>
    <scope>NUCLEOTIDE SEQUENCE [LARGE SCALE GENOMIC DNA]</scope>
    <source>
        <strain>CLIB 122 / E 150</strain>
    </source>
</reference>
<sequence length="292" mass="32942">MSSLPTPLPPYKWTLLTAGNANVVYKSDETDLLLRLRRNRNAPSTAEVDEYLTGTIRPAIGPFLFHYTVVNLPLGFLESLPEAENLDLGEPLGLLMENLGPKPNETNVLKSHAVKINYSDNWESYTVELKPKWLLQSPTAPKDSINCRTCALQLKREKPRICPLKLFNEDEQTSLQALEDVFPGTQKQFEPLAKFFSNSELFAEIRHMQHGDELGILGYANYVQVPPQFVTAMTMRDVSLFVHVQGDSVNGKIVDADLKSVSEKRDYWASLETDLIEGGWYEKPGTNCLLRN</sequence>
<gene>
    <name type="primary">IPK1</name>
    <name type="ordered locus">YALI0E07161g</name>
</gene>
<protein>
    <recommendedName>
        <fullName>Inositol-pentakisphosphate 2-kinase</fullName>
        <ecNumber>2.7.1.158</ecNumber>
    </recommendedName>
    <alternativeName>
        <fullName>Inositol-1,3,4,5,6-pentakisphosphate 2-kinase</fullName>
    </alternativeName>
    <alternativeName>
        <fullName>Ins(1,3,4,5,6)P5 2-kinase</fullName>
        <shortName>InsP5 2-kinase</shortName>
    </alternativeName>
</protein>
<organism>
    <name type="scientific">Yarrowia lipolytica (strain CLIB 122 / E 150)</name>
    <name type="common">Yeast</name>
    <name type="synonym">Candida lipolytica</name>
    <dbReference type="NCBI Taxonomy" id="284591"/>
    <lineage>
        <taxon>Eukaryota</taxon>
        <taxon>Fungi</taxon>
        <taxon>Dikarya</taxon>
        <taxon>Ascomycota</taxon>
        <taxon>Saccharomycotina</taxon>
        <taxon>Dipodascomycetes</taxon>
        <taxon>Dipodascales</taxon>
        <taxon>Dipodascales incertae sedis</taxon>
        <taxon>Yarrowia</taxon>
    </lineage>
</organism>
<comment type="function">
    <text evidence="1">Has kinase activity and phosphorylates inositol-1,3,4,5,6-pentakisphosphate (Ins(1,3,4,5,6)P5) to produce 1,2,3,4,5,6-hexakisphosphate (InsP6), also known as phytate.</text>
</comment>
<comment type="catalytic activity">
    <reaction>
        <text>1D-myo-inositol 1,3,4,5,6-pentakisphosphate + ATP = 1D-myo-inositol hexakisphosphate + ADP + H(+)</text>
        <dbReference type="Rhea" id="RHEA:20313"/>
        <dbReference type="ChEBI" id="CHEBI:15378"/>
        <dbReference type="ChEBI" id="CHEBI:30616"/>
        <dbReference type="ChEBI" id="CHEBI:57733"/>
        <dbReference type="ChEBI" id="CHEBI:58130"/>
        <dbReference type="ChEBI" id="CHEBI:456216"/>
        <dbReference type="EC" id="2.7.1.158"/>
    </reaction>
</comment>
<comment type="subcellular location">
    <subcellularLocation>
        <location evidence="1">Nucleus</location>
    </subcellularLocation>
</comment>
<comment type="domain">
    <text>The EXKPK motif is conserved in inositol-pentakisphosphate 2-kinases of both family 1 and 2.</text>
</comment>
<comment type="similarity">
    <text evidence="2">Belongs to the IPK1 type 1 family.</text>
</comment>
<accession>Q6C6Q7</accession>
<proteinExistence type="inferred from homology"/>
<keyword id="KW-0067">ATP-binding</keyword>
<keyword id="KW-0418">Kinase</keyword>
<keyword id="KW-0547">Nucleotide-binding</keyword>
<keyword id="KW-0539">Nucleus</keyword>
<keyword id="KW-1185">Reference proteome</keyword>
<keyword id="KW-0808">Transferase</keyword>
<dbReference type="EC" id="2.7.1.158"/>
<dbReference type="EMBL" id="CR382131">
    <property type="protein sequence ID" value="CAG79237.1"/>
    <property type="molecule type" value="Genomic_DNA"/>
</dbReference>
<dbReference type="RefSeq" id="XP_503655.1">
    <property type="nucleotide sequence ID" value="XM_503655.1"/>
</dbReference>
<dbReference type="SMR" id="Q6C6Q7"/>
<dbReference type="FunCoup" id="Q6C6Q7">
    <property type="interactions" value="32"/>
</dbReference>
<dbReference type="STRING" id="284591.Q6C6Q7"/>
<dbReference type="EnsemblFungi" id="CAG79237">
    <property type="protein sequence ID" value="CAG79237"/>
    <property type="gene ID" value="YALI0_E07161g"/>
</dbReference>
<dbReference type="KEGG" id="yli:2912429"/>
<dbReference type="VEuPathDB" id="FungiDB:YALI0_E07161g"/>
<dbReference type="HOGENOM" id="CLU_031304_0_0_1"/>
<dbReference type="InParanoid" id="Q6C6Q7"/>
<dbReference type="OMA" id="NKSARIW"/>
<dbReference type="OrthoDB" id="124023at4891"/>
<dbReference type="Proteomes" id="UP000001300">
    <property type="component" value="Chromosome E"/>
</dbReference>
<dbReference type="GO" id="GO:0005634">
    <property type="term" value="C:nucleus"/>
    <property type="evidence" value="ECO:0000318"/>
    <property type="project" value="GO_Central"/>
</dbReference>
<dbReference type="GO" id="GO:0005524">
    <property type="term" value="F:ATP binding"/>
    <property type="evidence" value="ECO:0007669"/>
    <property type="project" value="UniProtKB-KW"/>
</dbReference>
<dbReference type="GO" id="GO:0035299">
    <property type="term" value="F:inositol-1,3,4,5,6-pentakisphosphate 2-kinase activity"/>
    <property type="evidence" value="ECO:0000318"/>
    <property type="project" value="GO_Central"/>
</dbReference>
<dbReference type="GO" id="GO:0032958">
    <property type="term" value="P:inositol phosphate biosynthetic process"/>
    <property type="evidence" value="ECO:0000318"/>
    <property type="project" value="GO_Central"/>
</dbReference>
<dbReference type="InterPro" id="IPR009286">
    <property type="entry name" value="Ins_P5_2-kin"/>
</dbReference>
<dbReference type="PANTHER" id="PTHR14456">
    <property type="entry name" value="INOSITOL POLYPHOSPHATE KINASE 1"/>
    <property type="match status" value="1"/>
</dbReference>
<dbReference type="PANTHER" id="PTHR14456:SF2">
    <property type="entry name" value="INOSITOL-PENTAKISPHOSPHATE 2-KINASE"/>
    <property type="match status" value="1"/>
</dbReference>
<dbReference type="Pfam" id="PF06090">
    <property type="entry name" value="Ins_P5_2-kin"/>
    <property type="match status" value="1"/>
</dbReference>
<evidence type="ECO:0000250" key="1"/>
<evidence type="ECO:0000305" key="2"/>
<feature type="chain" id="PRO_0000110527" description="Inositol-pentakisphosphate 2-kinase">
    <location>
        <begin position="1"/>
        <end position="292"/>
    </location>
</feature>
<feature type="short sequence motif" description="EXKPK motif">
    <location>
        <begin position="128"/>
        <end position="132"/>
    </location>
</feature>
<name>IPK1_YARLI</name>